<feature type="chain" id="PRO_1000092717" description="Imidazoleglycerol-phosphate dehydratase">
    <location>
        <begin position="1"/>
        <end position="194"/>
    </location>
</feature>
<sequence length="194" mass="21601">MRKAEVKRKTKETDIYAELNIDGKGNYDIATGIGFFDHMLSLFAKHGLFDLKVVAKGDLEVDTHHTVEDVGIVLGNAFLKAAGDKKSIKRFSTFYVPMDEALVRVSVDISGRSFLYCDLPLKAERVGNFETENVEEFLRAFAYNFGITLHVELLHGGNSHHIIEATFKALGRALDEALRIDERAEGIPSTKGIL</sequence>
<keyword id="KW-0028">Amino-acid biosynthesis</keyword>
<keyword id="KW-0963">Cytoplasm</keyword>
<keyword id="KW-0368">Histidine biosynthesis</keyword>
<keyword id="KW-0456">Lyase</keyword>
<name>HIS7_THEPX</name>
<comment type="catalytic activity">
    <reaction evidence="1">
        <text>D-erythro-1-(imidazol-4-yl)glycerol 3-phosphate = 3-(imidazol-4-yl)-2-oxopropyl phosphate + H2O</text>
        <dbReference type="Rhea" id="RHEA:11040"/>
        <dbReference type="ChEBI" id="CHEBI:15377"/>
        <dbReference type="ChEBI" id="CHEBI:57766"/>
        <dbReference type="ChEBI" id="CHEBI:58278"/>
        <dbReference type="EC" id="4.2.1.19"/>
    </reaction>
</comment>
<comment type="pathway">
    <text evidence="1">Amino-acid biosynthesis; L-histidine biosynthesis; L-histidine from 5-phospho-alpha-D-ribose 1-diphosphate: step 6/9.</text>
</comment>
<comment type="subcellular location">
    <subcellularLocation>
        <location evidence="1">Cytoplasm</location>
    </subcellularLocation>
</comment>
<comment type="similarity">
    <text evidence="1">Belongs to the imidazoleglycerol-phosphate dehydratase family.</text>
</comment>
<organism>
    <name type="scientific">Thermoanaerobacter sp. (strain X514)</name>
    <dbReference type="NCBI Taxonomy" id="399726"/>
    <lineage>
        <taxon>Bacteria</taxon>
        <taxon>Bacillati</taxon>
        <taxon>Bacillota</taxon>
        <taxon>Clostridia</taxon>
        <taxon>Thermoanaerobacterales</taxon>
        <taxon>Thermoanaerobacteraceae</taxon>
        <taxon>Thermoanaerobacter</taxon>
    </lineage>
</organism>
<dbReference type="EC" id="4.2.1.19" evidence="1"/>
<dbReference type="EMBL" id="CP000923">
    <property type="protein sequence ID" value="ABY92302.1"/>
    <property type="molecule type" value="Genomic_DNA"/>
</dbReference>
<dbReference type="RefSeq" id="WP_009052789.1">
    <property type="nucleotide sequence ID" value="NC_010320.1"/>
</dbReference>
<dbReference type="SMR" id="B0K626"/>
<dbReference type="KEGG" id="tex:Teth514_1003"/>
<dbReference type="HOGENOM" id="CLU_044308_2_0_9"/>
<dbReference type="UniPathway" id="UPA00031">
    <property type="reaction ID" value="UER00011"/>
</dbReference>
<dbReference type="Proteomes" id="UP000002155">
    <property type="component" value="Chromosome"/>
</dbReference>
<dbReference type="GO" id="GO:0005737">
    <property type="term" value="C:cytoplasm"/>
    <property type="evidence" value="ECO:0007669"/>
    <property type="project" value="UniProtKB-SubCell"/>
</dbReference>
<dbReference type="GO" id="GO:0004424">
    <property type="term" value="F:imidazoleglycerol-phosphate dehydratase activity"/>
    <property type="evidence" value="ECO:0007669"/>
    <property type="project" value="UniProtKB-UniRule"/>
</dbReference>
<dbReference type="GO" id="GO:0000105">
    <property type="term" value="P:L-histidine biosynthetic process"/>
    <property type="evidence" value="ECO:0007669"/>
    <property type="project" value="UniProtKB-UniRule"/>
</dbReference>
<dbReference type="CDD" id="cd07914">
    <property type="entry name" value="IGPD"/>
    <property type="match status" value="1"/>
</dbReference>
<dbReference type="FunFam" id="3.30.230.40:FF:000001">
    <property type="entry name" value="Imidazoleglycerol-phosphate dehydratase HisB"/>
    <property type="match status" value="1"/>
</dbReference>
<dbReference type="FunFam" id="3.30.230.40:FF:000003">
    <property type="entry name" value="Imidazoleglycerol-phosphate dehydratase HisB"/>
    <property type="match status" value="1"/>
</dbReference>
<dbReference type="Gene3D" id="3.30.230.40">
    <property type="entry name" value="Imidazole glycerol phosphate dehydratase, domain 1"/>
    <property type="match status" value="2"/>
</dbReference>
<dbReference type="HAMAP" id="MF_00076">
    <property type="entry name" value="HisB"/>
    <property type="match status" value="1"/>
</dbReference>
<dbReference type="InterPro" id="IPR038494">
    <property type="entry name" value="IGPD_sf"/>
</dbReference>
<dbReference type="InterPro" id="IPR000807">
    <property type="entry name" value="ImidazoleglycerolP_deHydtase"/>
</dbReference>
<dbReference type="InterPro" id="IPR020565">
    <property type="entry name" value="ImidazoleglycerP_deHydtase_CS"/>
</dbReference>
<dbReference type="InterPro" id="IPR020568">
    <property type="entry name" value="Ribosomal_Su5_D2-typ_SF"/>
</dbReference>
<dbReference type="NCBIfam" id="NF002111">
    <property type="entry name" value="PRK00951.2-1"/>
    <property type="match status" value="1"/>
</dbReference>
<dbReference type="NCBIfam" id="NF002112">
    <property type="entry name" value="PRK00951.2-2"/>
    <property type="match status" value="1"/>
</dbReference>
<dbReference type="NCBIfam" id="NF002114">
    <property type="entry name" value="PRK00951.2-4"/>
    <property type="match status" value="1"/>
</dbReference>
<dbReference type="PANTHER" id="PTHR23133:SF2">
    <property type="entry name" value="IMIDAZOLEGLYCEROL-PHOSPHATE DEHYDRATASE"/>
    <property type="match status" value="1"/>
</dbReference>
<dbReference type="PANTHER" id="PTHR23133">
    <property type="entry name" value="IMIDAZOLEGLYCEROL-PHOSPHATE DEHYDRATASE HIS7"/>
    <property type="match status" value="1"/>
</dbReference>
<dbReference type="Pfam" id="PF00475">
    <property type="entry name" value="IGPD"/>
    <property type="match status" value="1"/>
</dbReference>
<dbReference type="SUPFAM" id="SSF54211">
    <property type="entry name" value="Ribosomal protein S5 domain 2-like"/>
    <property type="match status" value="2"/>
</dbReference>
<dbReference type="PROSITE" id="PS00954">
    <property type="entry name" value="IGP_DEHYDRATASE_1"/>
    <property type="match status" value="1"/>
</dbReference>
<dbReference type="PROSITE" id="PS00955">
    <property type="entry name" value="IGP_DEHYDRATASE_2"/>
    <property type="match status" value="1"/>
</dbReference>
<evidence type="ECO:0000255" key="1">
    <source>
        <dbReference type="HAMAP-Rule" id="MF_00076"/>
    </source>
</evidence>
<proteinExistence type="inferred from homology"/>
<reference key="1">
    <citation type="submission" date="2008-01" db="EMBL/GenBank/DDBJ databases">
        <title>Complete sequence of Thermoanaerobacter sp. X514.</title>
        <authorList>
            <consortium name="US DOE Joint Genome Institute"/>
            <person name="Copeland A."/>
            <person name="Lucas S."/>
            <person name="Lapidus A."/>
            <person name="Barry K."/>
            <person name="Glavina del Rio T."/>
            <person name="Dalin E."/>
            <person name="Tice H."/>
            <person name="Pitluck S."/>
            <person name="Bruce D."/>
            <person name="Goodwin L."/>
            <person name="Saunders E."/>
            <person name="Brettin T."/>
            <person name="Detter J.C."/>
            <person name="Han C."/>
            <person name="Schmutz J."/>
            <person name="Larimer F."/>
            <person name="Land M."/>
            <person name="Hauser L."/>
            <person name="Kyrpides N."/>
            <person name="Kim E."/>
            <person name="Hemme C."/>
            <person name="Fields M.W."/>
            <person name="He Z."/>
            <person name="Zhou J."/>
            <person name="Richardson P."/>
        </authorList>
    </citation>
    <scope>NUCLEOTIDE SEQUENCE [LARGE SCALE GENOMIC DNA]</scope>
    <source>
        <strain>X514</strain>
    </source>
</reference>
<protein>
    <recommendedName>
        <fullName evidence="1">Imidazoleglycerol-phosphate dehydratase</fullName>
        <shortName evidence="1">IGPD</shortName>
        <ecNumber evidence="1">4.2.1.19</ecNumber>
    </recommendedName>
</protein>
<accession>B0K626</accession>
<gene>
    <name evidence="1" type="primary">hisB</name>
    <name type="ordered locus">Teth514_1003</name>
</gene>